<sequence length="129" mass="14150">MSSTERLQRYLTDERGGCGDEEVAQRLDELEELDAAAGGPALEADVGVLSALANETRYKIIRILHIAGEELCVCEFSPLLDVSDSAISHSLSQLTEAGLVTRRKDGKWRKYQTTMRGDALLVALNGSRR</sequence>
<protein>
    <recommendedName>
        <fullName>Putative arsenical resistance operon repressor ArsR</fullName>
    </recommendedName>
</protein>
<evidence type="ECO:0000250" key="1"/>
<evidence type="ECO:0000255" key="2">
    <source>
        <dbReference type="PROSITE-ProRule" id="PRU00340"/>
    </source>
</evidence>
<evidence type="ECO:0000269" key="3">
    <source>
    </source>
</evidence>
<name>ARSR_HALSA</name>
<accession>O52029</accession>
<comment type="function">
    <text evidence="1">Transcriptional repressor for the arsADRC operon.</text>
</comment>
<comment type="induction">
    <text evidence="3">By arsenite and antimonite.</text>
</comment>
<comment type="disruption phenotype">
    <text evidence="3">Deletion of the arsADRC operon results in increased sensitivity to arsenite and antimonite but not arsenate.</text>
</comment>
<keyword id="KW-0059">Arsenical resistance</keyword>
<keyword id="KW-0238">DNA-binding</keyword>
<keyword id="KW-0614">Plasmid</keyword>
<keyword id="KW-1185">Reference proteome</keyword>
<keyword id="KW-0678">Repressor</keyword>
<keyword id="KW-0804">Transcription</keyword>
<keyword id="KW-0805">Transcription regulation</keyword>
<dbReference type="EMBL" id="AF016485">
    <property type="protein sequence ID" value="AAC82909.1"/>
    <property type="molecule type" value="Genomic_DNA"/>
</dbReference>
<dbReference type="PIR" id="T08342">
    <property type="entry name" value="T08342"/>
</dbReference>
<dbReference type="SMR" id="O52029"/>
<dbReference type="FunCoup" id="O52029">
    <property type="interactions" value="2"/>
</dbReference>
<dbReference type="KEGG" id="hal:arsR"/>
<dbReference type="HOGENOM" id="CLU_097806_3_0_2"/>
<dbReference type="InParanoid" id="O52029"/>
<dbReference type="OrthoDB" id="46231at2157"/>
<dbReference type="PhylomeDB" id="O52029"/>
<dbReference type="Proteomes" id="UP000000554">
    <property type="component" value="Plasmid pNRC100"/>
</dbReference>
<dbReference type="GO" id="GO:0003677">
    <property type="term" value="F:DNA binding"/>
    <property type="evidence" value="ECO:0007669"/>
    <property type="project" value="UniProtKB-KW"/>
</dbReference>
<dbReference type="GO" id="GO:0003700">
    <property type="term" value="F:DNA-binding transcription factor activity"/>
    <property type="evidence" value="ECO:0007669"/>
    <property type="project" value="InterPro"/>
</dbReference>
<dbReference type="GO" id="GO:0046685">
    <property type="term" value="P:response to arsenic-containing substance"/>
    <property type="evidence" value="ECO:0007669"/>
    <property type="project" value="UniProtKB-KW"/>
</dbReference>
<dbReference type="CDD" id="cd00090">
    <property type="entry name" value="HTH_ARSR"/>
    <property type="match status" value="1"/>
</dbReference>
<dbReference type="Gene3D" id="1.10.10.10">
    <property type="entry name" value="Winged helix-like DNA-binding domain superfamily/Winged helix DNA-binding domain"/>
    <property type="match status" value="1"/>
</dbReference>
<dbReference type="InterPro" id="IPR011991">
    <property type="entry name" value="ArsR-like_HTH"/>
</dbReference>
<dbReference type="InterPro" id="IPR001845">
    <property type="entry name" value="HTH_ArsR_DNA-bd_dom"/>
</dbReference>
<dbReference type="InterPro" id="IPR051011">
    <property type="entry name" value="Metal_resp_trans_reg"/>
</dbReference>
<dbReference type="InterPro" id="IPR036388">
    <property type="entry name" value="WH-like_DNA-bd_sf"/>
</dbReference>
<dbReference type="InterPro" id="IPR036390">
    <property type="entry name" value="WH_DNA-bd_sf"/>
</dbReference>
<dbReference type="NCBIfam" id="NF033788">
    <property type="entry name" value="HTH_metalloreg"/>
    <property type="match status" value="1"/>
</dbReference>
<dbReference type="PANTHER" id="PTHR43132">
    <property type="entry name" value="ARSENICAL RESISTANCE OPERON REPRESSOR ARSR-RELATED"/>
    <property type="match status" value="1"/>
</dbReference>
<dbReference type="PANTHER" id="PTHR43132:SF2">
    <property type="entry name" value="ARSENICAL RESISTANCE OPERON REPRESSOR ARSR-RELATED"/>
    <property type="match status" value="1"/>
</dbReference>
<dbReference type="Pfam" id="PF01022">
    <property type="entry name" value="HTH_5"/>
    <property type="match status" value="1"/>
</dbReference>
<dbReference type="PRINTS" id="PR00778">
    <property type="entry name" value="HTHARSR"/>
</dbReference>
<dbReference type="SMART" id="SM00418">
    <property type="entry name" value="HTH_ARSR"/>
    <property type="match status" value="1"/>
</dbReference>
<dbReference type="SUPFAM" id="SSF46785">
    <property type="entry name" value="Winged helix' DNA-binding domain"/>
    <property type="match status" value="1"/>
</dbReference>
<dbReference type="PROSITE" id="PS50987">
    <property type="entry name" value="HTH_ARSR_2"/>
    <property type="match status" value="1"/>
</dbReference>
<gene>
    <name type="primary">arsR</name>
    <name type="ordered locus">VNG_5182G</name>
</gene>
<organism>
    <name type="scientific">Halobacterium salinarum (strain ATCC 700922 / JCM 11081 / NRC-1)</name>
    <name type="common">Halobacterium halobium</name>
    <dbReference type="NCBI Taxonomy" id="64091"/>
    <lineage>
        <taxon>Archaea</taxon>
        <taxon>Methanobacteriati</taxon>
        <taxon>Methanobacteriota</taxon>
        <taxon>Stenosarchaea group</taxon>
        <taxon>Halobacteria</taxon>
        <taxon>Halobacteriales</taxon>
        <taxon>Halobacteriaceae</taxon>
        <taxon>Halobacterium</taxon>
        <taxon>Halobacterium salinarum NRC-34001</taxon>
    </lineage>
</organism>
<geneLocation type="plasmid">
    <name>pNRC100</name>
</geneLocation>
<reference key="1">
    <citation type="journal article" date="1998" name="Genome Res.">
        <title>Snapshot of a large dynamic replicon in a halophilic archaeon: megaplasmid or minichromosome?</title>
        <authorList>
            <person name="Ng W.V."/>
            <person name="Ciufo S.A."/>
            <person name="Smith T.M."/>
            <person name="Bumgarner R.E."/>
            <person name="Baskin D."/>
            <person name="Faust J."/>
            <person name="Hall B."/>
            <person name="Loretz C."/>
            <person name="Seto J."/>
            <person name="Slagel J."/>
            <person name="Hood L."/>
            <person name="DasSarma S."/>
        </authorList>
    </citation>
    <scope>NUCLEOTIDE SEQUENCE [LARGE SCALE GENOMIC DNA]</scope>
    <source>
        <strain>ATCC 700922 / JCM 11081 / NRC-1</strain>
    </source>
</reference>
<reference key="2">
    <citation type="journal article" date="2000" name="Proc. Natl. Acad. Sci. U.S.A.">
        <title>Genome sequence of Halobacterium species NRC-1.</title>
        <authorList>
            <person name="Ng W.V."/>
            <person name="Kennedy S.P."/>
            <person name="Mahairas G.G."/>
            <person name="Berquist B."/>
            <person name="Pan M."/>
            <person name="Shukla H.D."/>
            <person name="Lasky S.R."/>
            <person name="Baliga N.S."/>
            <person name="Thorsson V."/>
            <person name="Sbrogna J."/>
            <person name="Swartzell S."/>
            <person name="Weir D."/>
            <person name="Hall J."/>
            <person name="Dahl T.A."/>
            <person name="Welti R."/>
            <person name="Goo Y.A."/>
            <person name="Leithauser B."/>
            <person name="Keller K."/>
            <person name="Cruz R."/>
            <person name="Danson M.J."/>
            <person name="Hough D.W."/>
            <person name="Maddocks D.G."/>
            <person name="Jablonski P.E."/>
            <person name="Krebs M.P."/>
            <person name="Angevine C.M."/>
            <person name="Dale H."/>
            <person name="Isenbarger T.A."/>
            <person name="Peck R.F."/>
            <person name="Pohlschroder M."/>
            <person name="Spudich J.L."/>
            <person name="Jung K.-H."/>
            <person name="Alam M."/>
            <person name="Freitas T."/>
            <person name="Hou S."/>
            <person name="Daniels C.J."/>
            <person name="Dennis P.P."/>
            <person name="Omer A.D."/>
            <person name="Ebhardt H."/>
            <person name="Lowe T.M."/>
            <person name="Liang P."/>
            <person name="Riley M."/>
            <person name="Hood L."/>
            <person name="DasSarma S."/>
        </authorList>
    </citation>
    <scope>NUCLEOTIDE SEQUENCE [LARGE SCALE GENOMIC DNA]</scope>
    <source>
        <strain>ATCC 700922 / JCM 11081 / NRC-1</strain>
    </source>
</reference>
<reference key="3">
    <citation type="journal article" date="2004" name="J. Bacteriol.">
        <title>Arsenic resistance in Halobacterium sp. strain NRC-1 examined by using an improved gene knockout system.</title>
        <authorList>
            <person name="Wang G."/>
            <person name="Kennedy S.P."/>
            <person name="Fasiludeen S."/>
            <person name="Rensing C."/>
            <person name="DasSarma S."/>
        </authorList>
    </citation>
    <scope>INDUCTION</scope>
    <scope>DISRUPTION PHENOTYPE</scope>
    <source>
        <strain>ATCC 700922 / JCM 11081 / NRC-1</strain>
    </source>
</reference>
<feature type="chain" id="PRO_0000429114" description="Putative arsenical resistance operon repressor ArsR">
    <location>
        <begin position="1"/>
        <end position="129"/>
    </location>
</feature>
<feature type="domain" description="HTH arsR-type" evidence="2">
    <location>
        <begin position="37"/>
        <end position="129"/>
    </location>
</feature>
<feature type="DNA-binding region" description="H-T-H motif" evidence="2">
    <location>
        <begin position="73"/>
        <end position="96"/>
    </location>
</feature>
<proteinExistence type="evidence at transcript level"/>